<sequence>MIIYLHGFDSNSPGNHEKVLQLQFIDPDVRLISYSTRHPKHDMQHLLKEVDKMLQLNVDERPLICGVGLGGYWAERIGFLCDIRQVIFNPNLFPYENMEGKIDRPEEYADIATKCVTNFREKNRDRCLVILSRNDEALNSQRTSEELHHYYEIVWDEEQTHKFKNISPHLQRIKAFKTLG</sequence>
<organism>
    <name type="scientific">Escherichia coli O139:H28 (strain E24377A / ETEC)</name>
    <dbReference type="NCBI Taxonomy" id="331111"/>
    <lineage>
        <taxon>Bacteria</taxon>
        <taxon>Pseudomonadati</taxon>
        <taxon>Pseudomonadota</taxon>
        <taxon>Gammaproteobacteria</taxon>
        <taxon>Enterobacterales</taxon>
        <taxon>Enterobacteriaceae</taxon>
        <taxon>Escherichia</taxon>
    </lineage>
</organism>
<name>YCFP_ECO24</name>
<evidence type="ECO:0000255" key="1">
    <source>
        <dbReference type="HAMAP-Rule" id="MF_01047"/>
    </source>
</evidence>
<comment type="similarity">
    <text evidence="1">Belongs to the UPF0227 family.</text>
</comment>
<keyword id="KW-1185">Reference proteome</keyword>
<protein>
    <recommendedName>
        <fullName evidence="1">UPF0227 protein YcfP</fullName>
    </recommendedName>
</protein>
<reference key="1">
    <citation type="journal article" date="2008" name="J. Bacteriol.">
        <title>The pangenome structure of Escherichia coli: comparative genomic analysis of E. coli commensal and pathogenic isolates.</title>
        <authorList>
            <person name="Rasko D.A."/>
            <person name="Rosovitz M.J."/>
            <person name="Myers G.S.A."/>
            <person name="Mongodin E.F."/>
            <person name="Fricke W.F."/>
            <person name="Gajer P."/>
            <person name="Crabtree J."/>
            <person name="Sebaihia M."/>
            <person name="Thomson N.R."/>
            <person name="Chaudhuri R."/>
            <person name="Henderson I.R."/>
            <person name="Sperandio V."/>
            <person name="Ravel J."/>
        </authorList>
    </citation>
    <scope>NUCLEOTIDE SEQUENCE [LARGE SCALE GENOMIC DNA]</scope>
    <source>
        <strain>E24377A / ETEC</strain>
    </source>
</reference>
<proteinExistence type="inferred from homology"/>
<gene>
    <name evidence="1" type="primary">ycfP</name>
    <name type="ordered locus">EcE24377A_1230</name>
</gene>
<dbReference type="EMBL" id="CP000800">
    <property type="protein sequence ID" value="ABV18934.1"/>
    <property type="molecule type" value="Genomic_DNA"/>
</dbReference>
<dbReference type="RefSeq" id="WP_000587933.1">
    <property type="nucleotide sequence ID" value="NC_009801.1"/>
</dbReference>
<dbReference type="SMR" id="A7ZKL2"/>
<dbReference type="ESTHER" id="ecoli-ycfp">
    <property type="family name" value="abh_upf00227"/>
</dbReference>
<dbReference type="GeneID" id="93776300"/>
<dbReference type="KEGG" id="ecw:EcE24377A_1230"/>
<dbReference type="HOGENOM" id="CLU_128769_0_0_6"/>
<dbReference type="Proteomes" id="UP000001122">
    <property type="component" value="Chromosome"/>
</dbReference>
<dbReference type="FunFam" id="3.40.50.1820:FF:000007">
    <property type="entry name" value="UPF0227 protein YcfP"/>
    <property type="match status" value="1"/>
</dbReference>
<dbReference type="Gene3D" id="3.40.50.1820">
    <property type="entry name" value="alpha/beta hydrolase"/>
    <property type="match status" value="1"/>
</dbReference>
<dbReference type="HAMAP" id="MF_01047">
    <property type="entry name" value="UPF0227"/>
    <property type="match status" value="1"/>
</dbReference>
<dbReference type="InterPro" id="IPR029058">
    <property type="entry name" value="AB_hydrolase_fold"/>
</dbReference>
<dbReference type="InterPro" id="IPR022987">
    <property type="entry name" value="UPF0227"/>
</dbReference>
<dbReference type="InterPro" id="IPR008886">
    <property type="entry name" value="UPF0227/Esterase_YqiA"/>
</dbReference>
<dbReference type="NCBIfam" id="NF003431">
    <property type="entry name" value="PRK04940.1"/>
    <property type="match status" value="1"/>
</dbReference>
<dbReference type="PANTHER" id="PTHR35602">
    <property type="entry name" value="ESTERASE YQIA-RELATED"/>
    <property type="match status" value="1"/>
</dbReference>
<dbReference type="PANTHER" id="PTHR35602:SF2">
    <property type="entry name" value="UPF0227 PROTEIN YCFP"/>
    <property type="match status" value="1"/>
</dbReference>
<dbReference type="Pfam" id="PF05728">
    <property type="entry name" value="UPF0227"/>
    <property type="match status" value="1"/>
</dbReference>
<dbReference type="SUPFAM" id="SSF53474">
    <property type="entry name" value="alpha/beta-Hydrolases"/>
    <property type="match status" value="1"/>
</dbReference>
<feature type="chain" id="PRO_1000064287" description="UPF0227 protein YcfP">
    <location>
        <begin position="1"/>
        <end position="180"/>
    </location>
</feature>
<accession>A7ZKL2</accession>